<accession>Q11DS0</accession>
<evidence type="ECO:0000255" key="1">
    <source>
        <dbReference type="HAMAP-Rule" id="MF_00295"/>
    </source>
</evidence>
<proteinExistence type="inferred from homology"/>
<name>METAA_CHESB</name>
<gene>
    <name evidence="1" type="primary">metAA</name>
    <name type="ordered locus">Meso_3083</name>
</gene>
<protein>
    <recommendedName>
        <fullName evidence="1">Homoserine O-acetyltransferase</fullName>
        <shortName evidence="1">HAT</shortName>
        <ecNumber evidence="1">2.3.1.31</ecNumber>
    </recommendedName>
    <alternativeName>
        <fullName evidence="1">Homoserine transacetylase</fullName>
        <shortName evidence="1">HTA</shortName>
    </alternativeName>
</protein>
<organism>
    <name type="scientific">Chelativorans sp. (strain BNC1)</name>
    <dbReference type="NCBI Taxonomy" id="266779"/>
    <lineage>
        <taxon>Bacteria</taxon>
        <taxon>Pseudomonadati</taxon>
        <taxon>Pseudomonadota</taxon>
        <taxon>Alphaproteobacteria</taxon>
        <taxon>Hyphomicrobiales</taxon>
        <taxon>Phyllobacteriaceae</taxon>
        <taxon>Chelativorans</taxon>
    </lineage>
</organism>
<feature type="chain" id="PRO_1000021820" description="Homoserine O-acetyltransferase">
    <location>
        <begin position="1"/>
        <end position="312"/>
    </location>
</feature>
<feature type="active site" description="Acyl-thioester intermediate" evidence="1">
    <location>
        <position position="142"/>
    </location>
</feature>
<feature type="active site" description="Proton acceptor" evidence="1">
    <location>
        <position position="235"/>
    </location>
</feature>
<feature type="active site" evidence="1">
    <location>
        <position position="237"/>
    </location>
</feature>
<feature type="binding site" evidence="1">
    <location>
        <position position="163"/>
    </location>
    <ligand>
        <name>substrate</name>
    </ligand>
</feature>
<feature type="binding site" evidence="1">
    <location>
        <position position="192"/>
    </location>
    <ligand>
        <name>substrate</name>
    </ligand>
</feature>
<feature type="binding site" evidence="1">
    <location>
        <position position="249"/>
    </location>
    <ligand>
        <name>substrate</name>
    </ligand>
</feature>
<feature type="site" description="Important for acyl-CoA specificity" evidence="1">
    <location>
        <position position="111"/>
    </location>
</feature>
<feature type="site" description="Important for substrate specificity" evidence="1">
    <location>
        <position position="192"/>
    </location>
</feature>
<dbReference type="EC" id="2.3.1.31" evidence="1"/>
<dbReference type="EMBL" id="CP000390">
    <property type="protein sequence ID" value="ABG64455.1"/>
    <property type="molecule type" value="Genomic_DNA"/>
</dbReference>
<dbReference type="SMR" id="Q11DS0"/>
<dbReference type="STRING" id="266779.Meso_3083"/>
<dbReference type="KEGG" id="mes:Meso_3083"/>
<dbReference type="eggNOG" id="COG1897">
    <property type="taxonomic scope" value="Bacteria"/>
</dbReference>
<dbReference type="HOGENOM" id="CLU_057851_0_1_5"/>
<dbReference type="OrthoDB" id="9772423at2"/>
<dbReference type="UniPathway" id="UPA00051">
    <property type="reaction ID" value="UER00074"/>
</dbReference>
<dbReference type="GO" id="GO:0005737">
    <property type="term" value="C:cytoplasm"/>
    <property type="evidence" value="ECO:0007669"/>
    <property type="project" value="UniProtKB-SubCell"/>
</dbReference>
<dbReference type="GO" id="GO:0004414">
    <property type="term" value="F:homoserine O-acetyltransferase activity"/>
    <property type="evidence" value="ECO:0007669"/>
    <property type="project" value="UniProtKB-EC"/>
</dbReference>
<dbReference type="GO" id="GO:0008899">
    <property type="term" value="F:homoserine O-succinyltransferase activity"/>
    <property type="evidence" value="ECO:0007669"/>
    <property type="project" value="UniProtKB-UniRule"/>
</dbReference>
<dbReference type="GO" id="GO:0019281">
    <property type="term" value="P:L-methionine biosynthetic process from homoserine via O-succinyl-L-homoserine and cystathionine"/>
    <property type="evidence" value="ECO:0007669"/>
    <property type="project" value="InterPro"/>
</dbReference>
<dbReference type="CDD" id="cd03131">
    <property type="entry name" value="GATase1_HTS"/>
    <property type="match status" value="1"/>
</dbReference>
<dbReference type="Gene3D" id="3.40.50.880">
    <property type="match status" value="1"/>
</dbReference>
<dbReference type="HAMAP" id="MF_00295">
    <property type="entry name" value="MetA_acyltransf"/>
    <property type="match status" value="1"/>
</dbReference>
<dbReference type="InterPro" id="IPR029062">
    <property type="entry name" value="Class_I_gatase-like"/>
</dbReference>
<dbReference type="InterPro" id="IPR005697">
    <property type="entry name" value="HST_MetA"/>
</dbReference>
<dbReference type="InterPro" id="IPR033752">
    <property type="entry name" value="MetA_family"/>
</dbReference>
<dbReference type="NCBIfam" id="TIGR01001">
    <property type="entry name" value="metA"/>
    <property type="match status" value="1"/>
</dbReference>
<dbReference type="PANTHER" id="PTHR20919">
    <property type="entry name" value="HOMOSERINE O-SUCCINYLTRANSFERASE"/>
    <property type="match status" value="1"/>
</dbReference>
<dbReference type="PANTHER" id="PTHR20919:SF0">
    <property type="entry name" value="HOMOSERINE O-SUCCINYLTRANSFERASE"/>
    <property type="match status" value="1"/>
</dbReference>
<dbReference type="Pfam" id="PF04204">
    <property type="entry name" value="HTS"/>
    <property type="match status" value="1"/>
</dbReference>
<dbReference type="PIRSF" id="PIRSF000450">
    <property type="entry name" value="H_ser_succinyltr"/>
    <property type="match status" value="1"/>
</dbReference>
<dbReference type="SUPFAM" id="SSF52317">
    <property type="entry name" value="Class I glutamine amidotransferase-like"/>
    <property type="match status" value="1"/>
</dbReference>
<reference key="1">
    <citation type="submission" date="2006-06" db="EMBL/GenBank/DDBJ databases">
        <title>Complete sequence of chromosome of Mesorhizobium sp. BNC1.</title>
        <authorList>
            <consortium name="US DOE Joint Genome Institute"/>
            <person name="Copeland A."/>
            <person name="Lucas S."/>
            <person name="Lapidus A."/>
            <person name="Barry K."/>
            <person name="Detter J.C."/>
            <person name="Glavina del Rio T."/>
            <person name="Hammon N."/>
            <person name="Israni S."/>
            <person name="Dalin E."/>
            <person name="Tice H."/>
            <person name="Pitluck S."/>
            <person name="Chertkov O."/>
            <person name="Brettin T."/>
            <person name="Bruce D."/>
            <person name="Han C."/>
            <person name="Tapia R."/>
            <person name="Gilna P."/>
            <person name="Schmutz J."/>
            <person name="Larimer F."/>
            <person name="Land M."/>
            <person name="Hauser L."/>
            <person name="Kyrpides N."/>
            <person name="Mikhailova N."/>
            <person name="Richardson P."/>
        </authorList>
    </citation>
    <scope>NUCLEOTIDE SEQUENCE [LARGE SCALE GENOMIC DNA]</scope>
    <source>
        <strain>BNC1</strain>
    </source>
</reference>
<sequence>MPIKIPDQLPAREVLVREGVSVMDEKTALRQDIRPLQIGLLNLMPNKIRTETQFARLIGASPLQVELTLVRIGNHKAKNTPEDHLITFYETWEEVAPRKFDGFIVTGAPIELLPYEDVTYWNEMTRILDWTTSHVHSSFFICWGAMAAAWHFHGIPKHTLDKKAFGVFRHRNNAPASPYLAGFSDDLALPVSRWTEVRTADIPANSGLEMLMDSDETGPCLLAEAAGNRLYMFNHIEYDSTSLKEEYDRDVAAGVPIEVPHEYYPGNDPTRPPLNRWRSHAHLLFGNWINQVYQTTPYDLDKIGRNLEHALS</sequence>
<keyword id="KW-0012">Acyltransferase</keyword>
<keyword id="KW-0028">Amino-acid biosynthesis</keyword>
<keyword id="KW-0963">Cytoplasm</keyword>
<keyword id="KW-0486">Methionine biosynthesis</keyword>
<keyword id="KW-0808">Transferase</keyword>
<comment type="function">
    <text evidence="1">Transfers an acetyl group from acetyl-CoA to L-homoserine, forming acetyl-L-homoserine.</text>
</comment>
<comment type="catalytic activity">
    <reaction evidence="1">
        <text>L-homoserine + acetyl-CoA = O-acetyl-L-homoserine + CoA</text>
        <dbReference type="Rhea" id="RHEA:13701"/>
        <dbReference type="ChEBI" id="CHEBI:57287"/>
        <dbReference type="ChEBI" id="CHEBI:57288"/>
        <dbReference type="ChEBI" id="CHEBI:57476"/>
        <dbReference type="ChEBI" id="CHEBI:57716"/>
        <dbReference type="EC" id="2.3.1.31"/>
    </reaction>
</comment>
<comment type="pathway">
    <text evidence="1">Amino-acid biosynthesis; L-methionine biosynthesis via de novo pathway; O-acetyl-L-homoserine from L-homoserine: step 1/1.</text>
</comment>
<comment type="subcellular location">
    <subcellularLocation>
        <location evidence="1">Cytoplasm</location>
    </subcellularLocation>
</comment>
<comment type="similarity">
    <text evidence="1">Belongs to the MetA family.</text>
</comment>